<reference key="1">
    <citation type="journal article" date="2005" name="Pharmacogenet. Genomics">
        <title>Thiopurine S-methyltransferase pharmacogenetics: variant allele functional and comparative genomics.</title>
        <authorList>
            <person name="Salavaggione O.E."/>
            <person name="Wang L."/>
            <person name="Wiepert M."/>
            <person name="Yee V.C."/>
            <person name="Weinshilboum R.M."/>
        </authorList>
    </citation>
    <scope>NUCLEOTIDE SEQUENCE [MRNA]</scope>
</reference>
<name>TPMT_PANPR</name>
<dbReference type="EC" id="2.1.1.67"/>
<dbReference type="EMBL" id="AY827081">
    <property type="protein sequence ID" value="AAX37645.1"/>
    <property type="molecule type" value="mRNA"/>
</dbReference>
<dbReference type="SMR" id="Q3BCR1"/>
<dbReference type="Proteomes" id="UP001165780">
    <property type="component" value="Unplaced"/>
</dbReference>
<dbReference type="GO" id="GO:0005737">
    <property type="term" value="C:cytoplasm"/>
    <property type="evidence" value="ECO:0007669"/>
    <property type="project" value="UniProtKB-SubCell"/>
</dbReference>
<dbReference type="GO" id="GO:0008119">
    <property type="term" value="F:thiopurine S-methyltransferase activity"/>
    <property type="evidence" value="ECO:0007669"/>
    <property type="project" value="UniProtKB-EC"/>
</dbReference>
<dbReference type="GO" id="GO:0032259">
    <property type="term" value="P:methylation"/>
    <property type="evidence" value="ECO:0007669"/>
    <property type="project" value="UniProtKB-KW"/>
</dbReference>
<dbReference type="FunFam" id="3.40.50.150:FF:000101">
    <property type="entry name" value="Thiopurine S-methyltransferase"/>
    <property type="match status" value="1"/>
</dbReference>
<dbReference type="Gene3D" id="3.40.50.150">
    <property type="entry name" value="Vaccinia Virus protein VP39"/>
    <property type="match status" value="1"/>
</dbReference>
<dbReference type="HAMAP" id="MF_00812">
    <property type="entry name" value="Thiopur_methtran"/>
    <property type="match status" value="1"/>
</dbReference>
<dbReference type="InterPro" id="IPR029063">
    <property type="entry name" value="SAM-dependent_MTases_sf"/>
</dbReference>
<dbReference type="InterPro" id="IPR025835">
    <property type="entry name" value="Thiopurine_S-MeTrfase"/>
</dbReference>
<dbReference type="InterPro" id="IPR008854">
    <property type="entry name" value="TPMT"/>
</dbReference>
<dbReference type="PANTHER" id="PTHR10259">
    <property type="entry name" value="THIOPURINE S-METHYLTRANSFERASE"/>
    <property type="match status" value="1"/>
</dbReference>
<dbReference type="PANTHER" id="PTHR10259:SF11">
    <property type="entry name" value="THIOPURINE S-METHYLTRANSFERASE"/>
    <property type="match status" value="1"/>
</dbReference>
<dbReference type="Pfam" id="PF05724">
    <property type="entry name" value="TPMT"/>
    <property type="match status" value="1"/>
</dbReference>
<dbReference type="PIRSF" id="PIRSF023956">
    <property type="entry name" value="Thiopurine_S-methyltransferase"/>
    <property type="match status" value="1"/>
</dbReference>
<dbReference type="SUPFAM" id="SSF53335">
    <property type="entry name" value="S-adenosyl-L-methionine-dependent methyltransferases"/>
    <property type="match status" value="1"/>
</dbReference>
<dbReference type="PROSITE" id="PS51585">
    <property type="entry name" value="SAM_MT_TPMT"/>
    <property type="match status" value="1"/>
</dbReference>
<organism>
    <name type="scientific">Panthera pardus</name>
    <name type="common">Leopard</name>
    <name type="synonym">Felis pardus</name>
    <dbReference type="NCBI Taxonomy" id="9691"/>
    <lineage>
        <taxon>Eukaryota</taxon>
        <taxon>Metazoa</taxon>
        <taxon>Chordata</taxon>
        <taxon>Craniata</taxon>
        <taxon>Vertebrata</taxon>
        <taxon>Euteleostomi</taxon>
        <taxon>Mammalia</taxon>
        <taxon>Eutheria</taxon>
        <taxon>Laurasiatheria</taxon>
        <taxon>Carnivora</taxon>
        <taxon>Feliformia</taxon>
        <taxon>Felidae</taxon>
        <taxon>Pantherinae</taxon>
        <taxon>Panthera</taxon>
    </lineage>
</organism>
<evidence type="ECO:0000250" key="1"/>
<evidence type="ECO:0000250" key="2">
    <source>
        <dbReference type="UniProtKB" id="P51580"/>
    </source>
</evidence>
<evidence type="ECO:0000305" key="3"/>
<proteinExistence type="evidence at transcript level"/>
<sequence length="245" mass="28257">MDDASTLIDVKEYPGTEVQKNRVLTLEEWREKWVDGKIGFHQEQGHQLLKKHLDTFLKGENVLRVFFPLCGKAVEMKWFADRGHCVVGVEISELGIREFFIEQNLSYSEEPIMEIPGAKVFKSSSGNISLYCCNLFDLPRVNIGKFDRIWDRGALVAVNPGDRKCYTDIMLSLTRKGFRYLLAVLSYDPTKHPGPPFYVPDAEIKNLFGSTCNIHCLEKVDVFEERHKSWGIDYIVEKLYLLTEK</sequence>
<accession>Q3BCR1</accession>
<comment type="catalytic activity">
    <reaction evidence="2">
        <text>S-adenosyl-L-methionine + a thiopurine = S-adenosyl-L-homocysteine + a thiopurine S-methylether.</text>
        <dbReference type="EC" id="2.1.1.67"/>
    </reaction>
</comment>
<comment type="subunit">
    <text evidence="2">Monomer.</text>
</comment>
<comment type="subcellular location">
    <subcellularLocation>
        <location>Cytoplasm</location>
    </subcellularLocation>
</comment>
<comment type="similarity">
    <text evidence="3">Belongs to the class I-like SAM-binding methyltransferase superfamily. TPMT family.</text>
</comment>
<feature type="chain" id="PRO_0000220108" description="Thiopurine S-methyltransferase">
    <location>
        <begin position="1"/>
        <end position="245"/>
    </location>
</feature>
<feature type="binding site" evidence="1">
    <location>
        <begin position="29"/>
        <end position="40"/>
    </location>
    <ligand>
        <name>S-adenosyl-L-methionine</name>
        <dbReference type="ChEBI" id="CHEBI:59789"/>
    </ligand>
</feature>
<feature type="binding site" evidence="1">
    <location>
        <position position="40"/>
    </location>
    <ligand>
        <name>substrate</name>
    </ligand>
</feature>
<feature type="binding site" evidence="1">
    <location>
        <position position="69"/>
    </location>
    <ligand>
        <name>S-adenosyl-L-methionine</name>
        <dbReference type="ChEBI" id="CHEBI:59789"/>
    </ligand>
</feature>
<feature type="binding site" evidence="1">
    <location>
        <position position="90"/>
    </location>
    <ligand>
        <name>S-adenosyl-L-methionine</name>
        <dbReference type="ChEBI" id="CHEBI:59789"/>
    </ligand>
</feature>
<feature type="binding site" evidence="1">
    <location>
        <position position="152"/>
    </location>
    <ligand>
        <name>S-adenosyl-L-methionine</name>
        <dbReference type="ChEBI" id="CHEBI:59789"/>
    </ligand>
</feature>
<feature type="modified residue" description="N6-acetyllysine" evidence="2">
    <location>
        <position position="58"/>
    </location>
</feature>
<keyword id="KW-0007">Acetylation</keyword>
<keyword id="KW-0963">Cytoplasm</keyword>
<keyword id="KW-0489">Methyltransferase</keyword>
<keyword id="KW-0949">S-adenosyl-L-methionine</keyword>
<keyword id="KW-0808">Transferase</keyword>
<protein>
    <recommendedName>
        <fullName>Thiopurine S-methyltransferase</fullName>
        <ecNumber>2.1.1.67</ecNumber>
    </recommendedName>
    <alternativeName>
        <fullName>Thiopurine methyltransferase</fullName>
    </alternativeName>
</protein>
<gene>
    <name type="primary">TPMT</name>
</gene>